<feature type="signal peptide" evidence="2">
    <location>
        <begin position="1"/>
        <end position="19"/>
    </location>
</feature>
<feature type="chain" id="PRO_0000045855" description="Gluconate 2-dehydrogenase cytochrome c subunit">
    <location>
        <begin position="20"/>
        <end position="441"/>
    </location>
</feature>
<feature type="domain" description="Cytochrome c 1" evidence="1">
    <location>
        <begin position="26"/>
        <end position="129"/>
    </location>
</feature>
<feature type="domain" description="Cytochrome c 2" evidence="1">
    <location>
        <begin position="173"/>
        <end position="289"/>
    </location>
</feature>
<feature type="domain" description="Cytochrome c 3" evidence="1">
    <location>
        <begin position="312"/>
        <end position="403"/>
    </location>
</feature>
<feature type="binding site" description="covalent" evidence="1">
    <location>
        <position position="40"/>
    </location>
    <ligand>
        <name>heme c</name>
        <dbReference type="ChEBI" id="CHEBI:61717"/>
        <label>1</label>
    </ligand>
</feature>
<feature type="binding site" description="covalent" evidence="1">
    <location>
        <position position="43"/>
    </location>
    <ligand>
        <name>heme c</name>
        <dbReference type="ChEBI" id="CHEBI:61717"/>
        <label>1</label>
    </ligand>
</feature>
<feature type="binding site" description="axial binding residue" evidence="1">
    <location>
        <position position="44"/>
    </location>
    <ligand>
        <name>heme c</name>
        <dbReference type="ChEBI" id="CHEBI:61717"/>
        <label>1</label>
    </ligand>
    <ligandPart>
        <name>Fe</name>
        <dbReference type="ChEBI" id="CHEBI:18248"/>
    </ligandPart>
</feature>
<feature type="binding site" description="covalent" evidence="1">
    <location>
        <position position="188"/>
    </location>
    <ligand>
        <name>heme c</name>
        <dbReference type="ChEBI" id="CHEBI:61717"/>
        <label>2</label>
    </ligand>
</feature>
<feature type="binding site" description="covalent" evidence="1">
    <location>
        <position position="191"/>
    </location>
    <ligand>
        <name>heme c</name>
        <dbReference type="ChEBI" id="CHEBI:61717"/>
        <label>2</label>
    </ligand>
</feature>
<feature type="binding site" description="axial binding residue" evidence="1">
    <location>
        <position position="192"/>
    </location>
    <ligand>
        <name>heme c</name>
        <dbReference type="ChEBI" id="CHEBI:61717"/>
        <label>2</label>
    </ligand>
    <ligandPart>
        <name>Fe</name>
        <dbReference type="ChEBI" id="CHEBI:18248"/>
    </ligandPart>
</feature>
<feature type="binding site" description="covalent" evidence="1">
    <location>
        <position position="325"/>
    </location>
    <ligand>
        <name>heme c</name>
        <dbReference type="ChEBI" id="CHEBI:61717"/>
        <label>3</label>
    </ligand>
</feature>
<feature type="binding site" description="covalent" evidence="1">
    <location>
        <position position="328"/>
    </location>
    <ligand>
        <name>heme c</name>
        <dbReference type="ChEBI" id="CHEBI:61717"/>
        <label>3</label>
    </ligand>
</feature>
<feature type="binding site" description="axial binding residue" evidence="1">
    <location>
        <position position="329"/>
    </location>
    <ligand>
        <name>heme c</name>
        <dbReference type="ChEBI" id="CHEBI:61717"/>
        <label>3</label>
    </ligand>
    <ligandPart>
        <name>Fe</name>
        <dbReference type="ChEBI" id="CHEBI:18248"/>
    </ligandPart>
</feature>
<accession>O34215</accession>
<reference key="1">
    <citation type="journal article" date="1997" name="J. Bacteriol.">
        <title>Cloning and expression of a gene cluster encoding three subunits of membrane-bound gluconate dehydrogenase from Erwinia cypripedii ATCC 29267 in Escherichia coli.</title>
        <authorList>
            <person name="Yum D.-Y."/>
            <person name="Lee Y.-P."/>
            <person name="Pan J.-G."/>
        </authorList>
    </citation>
    <scope>NUCLEOTIDE SEQUENCE [GENOMIC DNA]</scope>
    <scope>PROTEIN SEQUENCE OF 20-28</scope>
    <scope>BIOPHYSICOCHEMICAL PROPERTIES</scope>
    <source>
        <strain>ATCC 29267 / DSM 3873 / CIP 105195 / LMG 2657 / NCPPB 3004</strain>
    </source>
</reference>
<comment type="function">
    <text>Part of the heterotrimer that catalyzes the conversion of D-gluconate to 2-dehydro-D-gluconate.</text>
</comment>
<comment type="catalytic activity">
    <reaction>
        <text>D-gluconate + A = 2-dehydro-D-gluconate + AH2</text>
        <dbReference type="Rhea" id="RHEA:12769"/>
        <dbReference type="ChEBI" id="CHEBI:13193"/>
        <dbReference type="ChEBI" id="CHEBI:16808"/>
        <dbReference type="ChEBI" id="CHEBI:17499"/>
        <dbReference type="ChEBI" id="CHEBI:18391"/>
        <dbReference type="EC" id="1.1.99.3"/>
    </reaction>
</comment>
<comment type="cofactor">
    <cofactor>
        <name>FAD</name>
        <dbReference type="ChEBI" id="CHEBI:57692"/>
    </cofactor>
</comment>
<comment type="biophysicochemical properties">
    <phDependence>
        <text evidence="2">Optimum pH is 5.0.</text>
    </phDependence>
    <temperatureDependence>
        <text evidence="2">Optimum temperature is 30 degrees Celsius.</text>
    </temperatureDependence>
</comment>
<comment type="subunit">
    <text>Heterotrimer.</text>
</comment>
<comment type="subcellular location">
    <subcellularLocation>
        <location evidence="3">Cell membrane</location>
        <topology evidence="3">Peripheral membrane protein</topology>
        <orientation evidence="3">Periplasmic side</orientation>
    </subcellularLocation>
</comment>
<comment type="PTM">
    <text evidence="3">Binds 3 heme c groupd covalently per subunit.</text>
</comment>
<name>GADH2_PANCY</name>
<sequence length="441" mass="47097">MMKSILALVLGTLSFAALADDQANDALVKRGEYLARAGDCVACHSVKGGQPFAGGLPMATPIGTIYSTNITPDKTTGIGDYSYDDFQKAVRHGVAKNGDTLYPAMPYPSYAVVSDEDMKALYAYFMHGVAPVAQANKDSDIPWPLSMRWPLAIWRGVFAPDVKAFQPAAQEDPVLARGRYLVEGLGHCGACHTPRSITMQEKALSNDGAHDYLSGSSAPIDGWTASNLRGDNRDGLGRWSEDDLRQFLRYGRNDHTAAFGGMTDVVEHSLQHLSDDDITAIARYLKSLGAKDASQTVFTQDDQVAKALWKGDDSQTGASVYVDSCAACHKTDGSRLSALLPGAAWQPGGAGEPDPTSLIHIVLTGGTLPGVQGAPTAITMPAFGWRLNDQQVADVVNFIRGSWGNGAKATVTAKDVASLRKDETVQAHQGNADIKVLEQQQ</sequence>
<organism>
    <name type="scientific">Pantoea cypripedii</name>
    <name type="common">Pectobacterium cypripedii</name>
    <name type="synonym">Erwinia cypripedii</name>
    <dbReference type="NCBI Taxonomy" id="55209"/>
    <lineage>
        <taxon>Bacteria</taxon>
        <taxon>Pseudomonadati</taxon>
        <taxon>Pseudomonadota</taxon>
        <taxon>Gammaproteobacteria</taxon>
        <taxon>Enterobacterales</taxon>
        <taxon>Erwiniaceae</taxon>
        <taxon>Pantoea</taxon>
    </lineage>
</organism>
<dbReference type="EC" id="1.1.99.3"/>
<dbReference type="EMBL" id="U97665">
    <property type="protein sequence ID" value="AAC45884.1"/>
    <property type="molecule type" value="Genomic_DNA"/>
</dbReference>
<dbReference type="PIR" id="C38575">
    <property type="entry name" value="C38575"/>
</dbReference>
<dbReference type="SMR" id="O34215"/>
<dbReference type="STRING" id="55209.HA50_01505"/>
<dbReference type="BioCyc" id="MetaCyc:MONOMER-18006"/>
<dbReference type="GO" id="GO:0005886">
    <property type="term" value="C:plasma membrane"/>
    <property type="evidence" value="ECO:0007669"/>
    <property type="project" value="UniProtKB-SubCell"/>
</dbReference>
<dbReference type="GO" id="GO:0009055">
    <property type="term" value="F:electron transfer activity"/>
    <property type="evidence" value="ECO:0007669"/>
    <property type="project" value="InterPro"/>
</dbReference>
<dbReference type="GO" id="GO:0033717">
    <property type="term" value="F:gluconate 2-dehydrogenase (acceptor) activity"/>
    <property type="evidence" value="ECO:0007669"/>
    <property type="project" value="UniProtKB-EC"/>
</dbReference>
<dbReference type="GO" id="GO:0020037">
    <property type="term" value="F:heme binding"/>
    <property type="evidence" value="ECO:0007669"/>
    <property type="project" value="InterPro"/>
</dbReference>
<dbReference type="GO" id="GO:0005506">
    <property type="term" value="F:iron ion binding"/>
    <property type="evidence" value="ECO:0007669"/>
    <property type="project" value="InterPro"/>
</dbReference>
<dbReference type="Gene3D" id="1.10.760.10">
    <property type="entry name" value="Cytochrome c-like domain"/>
    <property type="match status" value="3"/>
</dbReference>
<dbReference type="InterPro" id="IPR009056">
    <property type="entry name" value="Cyt_c-like_dom"/>
</dbReference>
<dbReference type="InterPro" id="IPR036909">
    <property type="entry name" value="Cyt_c-like_dom_sf"/>
</dbReference>
<dbReference type="InterPro" id="IPR008168">
    <property type="entry name" value="Cyt_C_IC"/>
</dbReference>
<dbReference type="InterPro" id="IPR051459">
    <property type="entry name" value="Cytochrome_c-type_DH"/>
</dbReference>
<dbReference type="InterPro" id="IPR014353">
    <property type="entry name" value="Membr-bd_ADH_cyt_c"/>
</dbReference>
<dbReference type="PANTHER" id="PTHR35008:SF8">
    <property type="entry name" value="ALCOHOL DEHYDROGENASE CYTOCHROME C SUBUNIT"/>
    <property type="match status" value="1"/>
</dbReference>
<dbReference type="PANTHER" id="PTHR35008">
    <property type="entry name" value="BLL4482 PROTEIN-RELATED"/>
    <property type="match status" value="1"/>
</dbReference>
<dbReference type="Pfam" id="PF00034">
    <property type="entry name" value="Cytochrom_C"/>
    <property type="match status" value="2"/>
</dbReference>
<dbReference type="PIRSF" id="PIRSF000018">
    <property type="entry name" value="Mb_ADH_cyt_c"/>
    <property type="match status" value="1"/>
</dbReference>
<dbReference type="PRINTS" id="PR00605">
    <property type="entry name" value="CYTCHROMECIC"/>
</dbReference>
<dbReference type="SUPFAM" id="SSF46626">
    <property type="entry name" value="Cytochrome c"/>
    <property type="match status" value="3"/>
</dbReference>
<dbReference type="PROSITE" id="PS51007">
    <property type="entry name" value="CYTC"/>
    <property type="match status" value="3"/>
</dbReference>
<proteinExistence type="evidence at protein level"/>
<protein>
    <recommendedName>
        <fullName>Gluconate 2-dehydrogenase cytochrome c subunit</fullName>
        <shortName>GA 2-DH cytochrome c subunit</shortName>
        <shortName>GADH cytochrome c subunit</shortName>
        <ecNumber>1.1.99.3</ecNumber>
    </recommendedName>
</protein>
<evidence type="ECO:0000255" key="1">
    <source>
        <dbReference type="PROSITE-ProRule" id="PRU00433"/>
    </source>
</evidence>
<evidence type="ECO:0000269" key="2">
    <source>
    </source>
</evidence>
<evidence type="ECO:0000305" key="3"/>
<keyword id="KW-1003">Cell membrane</keyword>
<keyword id="KW-0903">Direct protein sequencing</keyword>
<keyword id="KW-0249">Electron transport</keyword>
<keyword id="KW-0349">Heme</keyword>
<keyword id="KW-0408">Iron</keyword>
<keyword id="KW-0472">Membrane</keyword>
<keyword id="KW-0479">Metal-binding</keyword>
<keyword id="KW-0560">Oxidoreductase</keyword>
<keyword id="KW-0677">Repeat</keyword>
<keyword id="KW-0732">Signal</keyword>
<keyword id="KW-0813">Transport</keyword>